<comment type="similarity">
    <text evidence="1">Belongs to the TTC27 family.</text>
</comment>
<feature type="chain" id="PRO_0000295098" description="Tetratricopeptide repeat protein 27">
    <location>
        <begin position="1"/>
        <end position="843"/>
    </location>
</feature>
<feature type="repeat" description="TPR 1">
    <location>
        <begin position="453"/>
        <end position="486"/>
    </location>
</feature>
<feature type="repeat" description="TPR 2">
    <location>
        <begin position="492"/>
        <end position="525"/>
    </location>
</feature>
<feature type="repeat" description="TPR 3">
    <location>
        <begin position="527"/>
        <end position="560"/>
    </location>
</feature>
<feature type="repeat" description="TPR 4">
    <location>
        <begin position="561"/>
        <end position="594"/>
    </location>
</feature>
<feature type="repeat" description="TPR 5">
    <location>
        <begin position="596"/>
        <end position="628"/>
    </location>
</feature>
<feature type="repeat" description="TPR 6">
    <location>
        <begin position="629"/>
        <end position="662"/>
    </location>
</feature>
<evidence type="ECO:0000305" key="1"/>
<sequence length="843" mass="96661">MWTPELAILRGFPTEAERQQWKQEGVVGSESGSFLQLLLEGNHEAIFLNSMTQNIFSSTTTAEEKIDSYLEKQVVTFLDYSTDLDTTERQRLIFLLGVSSLQLFVQSNWTGPPVDLHPQDFLSSVLFQQFSEVKGLDAFVLSLLILDGESIYSLTSKPILLLLARIILVNVRHKLTAIQSLPWWTLRCVNIHQHLLEERSPLLFTLAENCIDQVMKLQNLFVDDSGRYLAIQFHLECAYVFLYYYEYRKAKDQLDIAKDISQLQTDLTGALGKRTRFQENYVAQLILDVRREGDVLSNCEFTPAPTPQEHLTKNLELNDDTILNDIKLADCEQFQMPDLCAEELAIILGICTNFQKNNPVHTLTEEELLAFTSCLLSQPKFWAIQTSALILRTKLEKGSTRRVERAMRQTQALADQFEDKTTSVLERLKIFYCCQVPPHWAIQRQLASLLFELGCTSSALQIFEKLEMWEDVVICYERAGQHGKAEEILRQELEKKQTPSLYCLLGDVLGDHSCYDKAWELSRYRSARAQRSKALLHLRNKEFQECVECFERSVKINPMQLGVWFSLGCAYLALEDYQGSAKAFQRCVTLEPDNAEAWNNLSTSYIRLKQKVKAFRTLQEALKCNYEHWQIWENYILTSTDVGEFSEAIKAYHRLLDLRDKYKDVQVLKILLRAVIDGMTDRSGDVATGLKGKLQELFGRVTSRVTNDGEIWRLYAHVYGNGQSEKPDENEKAFQCLSKAYKCDTQSNCWEKDITSFKEVVQRALGLAHVAIKCSKNKSSPQEAVQMLSSVRLNLRGLLSKAKQLFTDVATGEMSRELADDITAMDTLVTELQDLSNQFRNQY</sequence>
<accession>Q5RBW9</accession>
<name>TTC27_PONAB</name>
<proteinExistence type="evidence at transcript level"/>
<keyword id="KW-1185">Reference proteome</keyword>
<keyword id="KW-0677">Repeat</keyword>
<keyword id="KW-0802">TPR repeat</keyword>
<protein>
    <recommendedName>
        <fullName>Tetratricopeptide repeat protein 27</fullName>
        <shortName>TPR repeat protein 27</shortName>
    </recommendedName>
</protein>
<dbReference type="EMBL" id="CR858513">
    <property type="protein sequence ID" value="CAH90741.1"/>
    <property type="molecule type" value="mRNA"/>
</dbReference>
<dbReference type="RefSeq" id="NP_001127328.1">
    <property type="nucleotide sequence ID" value="NM_001133856.1"/>
</dbReference>
<dbReference type="SMR" id="Q5RBW9"/>
<dbReference type="FunCoup" id="Q5RBW9">
    <property type="interactions" value="1195"/>
</dbReference>
<dbReference type="STRING" id="9601.ENSPPYP00000013964"/>
<dbReference type="GeneID" id="100174389"/>
<dbReference type="KEGG" id="pon:100174389"/>
<dbReference type="CTD" id="55622"/>
<dbReference type="eggNOG" id="KOG1128">
    <property type="taxonomic scope" value="Eukaryota"/>
</dbReference>
<dbReference type="InParanoid" id="Q5RBW9"/>
<dbReference type="OrthoDB" id="1936594at2759"/>
<dbReference type="Proteomes" id="UP000001595">
    <property type="component" value="Unplaced"/>
</dbReference>
<dbReference type="Gene3D" id="1.25.40.10">
    <property type="entry name" value="Tetratricopeptide repeat domain"/>
    <property type="match status" value="1"/>
</dbReference>
<dbReference type="InterPro" id="IPR011990">
    <property type="entry name" value="TPR-like_helical_dom_sf"/>
</dbReference>
<dbReference type="InterPro" id="IPR019734">
    <property type="entry name" value="TPR_rpt"/>
</dbReference>
<dbReference type="InterPro" id="IPR044244">
    <property type="entry name" value="TTC27/Emw1"/>
</dbReference>
<dbReference type="PANTHER" id="PTHR16193">
    <property type="entry name" value="TETRATRICOPEPTIDE REPEAT PROTEIN 27"/>
    <property type="match status" value="1"/>
</dbReference>
<dbReference type="PANTHER" id="PTHR16193:SF0">
    <property type="entry name" value="TETRATRICOPEPTIDE REPEAT PROTEIN 27"/>
    <property type="match status" value="1"/>
</dbReference>
<dbReference type="Pfam" id="PF13432">
    <property type="entry name" value="TPR_16"/>
    <property type="match status" value="1"/>
</dbReference>
<dbReference type="SMART" id="SM00028">
    <property type="entry name" value="TPR"/>
    <property type="match status" value="4"/>
</dbReference>
<dbReference type="SUPFAM" id="SSF48452">
    <property type="entry name" value="TPR-like"/>
    <property type="match status" value="1"/>
</dbReference>
<dbReference type="PROSITE" id="PS50005">
    <property type="entry name" value="TPR"/>
    <property type="match status" value="4"/>
</dbReference>
<dbReference type="PROSITE" id="PS50293">
    <property type="entry name" value="TPR_REGION"/>
    <property type="match status" value="1"/>
</dbReference>
<reference key="1">
    <citation type="submission" date="2004-11" db="EMBL/GenBank/DDBJ databases">
        <authorList>
            <consortium name="The German cDNA consortium"/>
        </authorList>
    </citation>
    <scope>NUCLEOTIDE SEQUENCE [LARGE SCALE MRNA]</scope>
    <source>
        <tissue>Kidney</tissue>
    </source>
</reference>
<organism>
    <name type="scientific">Pongo abelii</name>
    <name type="common">Sumatran orangutan</name>
    <name type="synonym">Pongo pygmaeus abelii</name>
    <dbReference type="NCBI Taxonomy" id="9601"/>
    <lineage>
        <taxon>Eukaryota</taxon>
        <taxon>Metazoa</taxon>
        <taxon>Chordata</taxon>
        <taxon>Craniata</taxon>
        <taxon>Vertebrata</taxon>
        <taxon>Euteleostomi</taxon>
        <taxon>Mammalia</taxon>
        <taxon>Eutheria</taxon>
        <taxon>Euarchontoglires</taxon>
        <taxon>Primates</taxon>
        <taxon>Haplorrhini</taxon>
        <taxon>Catarrhini</taxon>
        <taxon>Hominidae</taxon>
        <taxon>Pongo</taxon>
    </lineage>
</organism>
<gene>
    <name type="primary">TTC27</name>
</gene>